<keyword id="KW-0963">Cytoplasm</keyword>
<keyword id="KW-0238">DNA-binding</keyword>
<organism>
    <name type="scientific">Helicobacter pylori (strain Shi470)</name>
    <dbReference type="NCBI Taxonomy" id="512562"/>
    <lineage>
        <taxon>Bacteria</taxon>
        <taxon>Pseudomonadati</taxon>
        <taxon>Campylobacterota</taxon>
        <taxon>Epsilonproteobacteria</taxon>
        <taxon>Campylobacterales</taxon>
        <taxon>Helicobacteraceae</taxon>
        <taxon>Helicobacter</taxon>
    </lineage>
</organism>
<sequence length="100" mass="10994">MDFSQLGGLLDGMKKEFSQLEEKNKDTIHTSKSGGGMVSVSFNGVGELVDLQIDDSLLEDKEAMQIYLMSALNDGYKAVEENRKNLAFNMLGNLGNFAKL</sequence>
<accession>B2UW37</accession>
<protein>
    <recommendedName>
        <fullName evidence="1">Nucleoid-associated protein HPSH_00175</fullName>
    </recommendedName>
</protein>
<evidence type="ECO:0000255" key="1">
    <source>
        <dbReference type="HAMAP-Rule" id="MF_00274"/>
    </source>
</evidence>
<gene>
    <name type="ordered locus">HPSH_00175</name>
</gene>
<reference key="1">
    <citation type="submission" date="2008-05" db="EMBL/GenBank/DDBJ databases">
        <title>Genome sequence of Helicobacter pylori from the remote Amazon: traces of Asian ancestry of the first Americans.</title>
        <authorList>
            <person name="Kersulyte D."/>
            <person name="Kalia A."/>
            <person name="Gilman R.H."/>
            <person name="Berg D.E."/>
        </authorList>
    </citation>
    <scope>NUCLEOTIDE SEQUENCE [LARGE SCALE GENOMIC DNA]</scope>
    <source>
        <strain>Shi470</strain>
    </source>
</reference>
<comment type="function">
    <text evidence="1">Binds to DNA and alters its conformation. May be involved in regulation of gene expression, nucleoid organization and DNA protection.</text>
</comment>
<comment type="subunit">
    <text evidence="1">Homodimer.</text>
</comment>
<comment type="subcellular location">
    <subcellularLocation>
        <location evidence="1">Cytoplasm</location>
        <location evidence="1">Nucleoid</location>
    </subcellularLocation>
</comment>
<comment type="similarity">
    <text evidence="1">Belongs to the YbaB/EbfC family.</text>
</comment>
<name>Y175_HELPS</name>
<dbReference type="EMBL" id="CP001072">
    <property type="protein sequence ID" value="ACD47502.1"/>
    <property type="molecule type" value="Genomic_DNA"/>
</dbReference>
<dbReference type="RefSeq" id="WP_000347918.1">
    <property type="nucleotide sequence ID" value="NC_010698.2"/>
</dbReference>
<dbReference type="SMR" id="B2UW37"/>
<dbReference type="KEGG" id="hps:HPSH_00175"/>
<dbReference type="HOGENOM" id="CLU_140930_2_1_7"/>
<dbReference type="GO" id="GO:0043590">
    <property type="term" value="C:bacterial nucleoid"/>
    <property type="evidence" value="ECO:0007669"/>
    <property type="project" value="UniProtKB-UniRule"/>
</dbReference>
<dbReference type="GO" id="GO:0005737">
    <property type="term" value="C:cytoplasm"/>
    <property type="evidence" value="ECO:0007669"/>
    <property type="project" value="UniProtKB-UniRule"/>
</dbReference>
<dbReference type="GO" id="GO:0003677">
    <property type="term" value="F:DNA binding"/>
    <property type="evidence" value="ECO:0007669"/>
    <property type="project" value="UniProtKB-UniRule"/>
</dbReference>
<dbReference type="Gene3D" id="3.30.1310.10">
    <property type="entry name" value="Nucleoid-associated protein YbaB-like domain"/>
    <property type="match status" value="1"/>
</dbReference>
<dbReference type="HAMAP" id="MF_00274">
    <property type="entry name" value="DNA_YbaB_EbfC"/>
    <property type="match status" value="1"/>
</dbReference>
<dbReference type="InterPro" id="IPR036894">
    <property type="entry name" value="YbaB-like_sf"/>
</dbReference>
<dbReference type="InterPro" id="IPR004401">
    <property type="entry name" value="YbaB/EbfC"/>
</dbReference>
<dbReference type="NCBIfam" id="TIGR00103">
    <property type="entry name" value="DNA_YbaB_EbfC"/>
    <property type="match status" value="1"/>
</dbReference>
<dbReference type="Pfam" id="PF02575">
    <property type="entry name" value="YbaB_DNA_bd"/>
    <property type="match status" value="1"/>
</dbReference>
<dbReference type="PIRSF" id="PIRSF004555">
    <property type="entry name" value="UCP004555"/>
    <property type="match status" value="1"/>
</dbReference>
<dbReference type="SUPFAM" id="SSF82607">
    <property type="entry name" value="YbaB-like"/>
    <property type="match status" value="1"/>
</dbReference>
<proteinExistence type="inferred from homology"/>
<feature type="chain" id="PRO_1000114617" description="Nucleoid-associated protein HPSH_00175">
    <location>
        <begin position="1"/>
        <end position="100"/>
    </location>
</feature>